<name>AB22G_ARATH</name>
<sequence length="751" mass="82931">MSMEKPPLASGLARTRSEQLYETVAADIRSPHGSMDANGVPATAPAAVGGGGTLSRKSSRRLMGMSPGRSSGAGTHIRKSRSAQLKLELEEVSSGAALSRASSASLGLSFSFTGFAMPPEEISDSKPFSDDEMIPEDIEAGKKKPKFQAEPTLPIFLKFRDVTYKVVIKKLTSSVEKEILTGISGSVNPGEVLALMGPSGSGKTTLLSLLAGRISQSSTGGSVTYNDKPYSKYLKSKIGFVTQDDVLFPHLTVKETLTYAARLRLPKTLTREQKKQRALDVIQELGLERCQDTMIGGAFVRGVSGGERKRVSIGNEIIINPSLLLLDEPTSGLDSTTALRTILMLHDIAEAGKTVITTIHQPSSRLFHRFDKLILLGRGSLLYFGKSSEALDYFSSIGCSPLIAMNPAEFLLDLANGNINDISVPSELDDRVQVGNSGRETQTGKPSPAAVHEYLVEAYETRVAEQEKKKLLDPVPLDEEAKAKSTRLKRQWGTCWWEQYCILFCRGLKERRHEYFSWLRVTQVLSTAVILGLLWWQSDIRTPMGLQDQAGLLFFIAVFWGFFPVFTAIFAFPQERAMLNKERAADMYRLSAYFLARTTSDLPLDFILPSLFLLVVYFMTGLRISPYPFFLSMLTVFLCIIAAQGLGLAIGAILMDLKKATTLASVTVMTFMLAGGFFVKKVPVFISWIRYLSFNYHTYKLLLKVQYQDFAVSINGMRIDNGLTEVAALVVMIFGYRLLAYLSLRQMKIVT</sequence>
<keyword id="KW-0025">Alternative splicing</keyword>
<keyword id="KW-0067">ATP-binding</keyword>
<keyword id="KW-0472">Membrane</keyword>
<keyword id="KW-0547">Nucleotide-binding</keyword>
<keyword id="KW-1185">Reference proteome</keyword>
<keyword id="KW-0812">Transmembrane</keyword>
<keyword id="KW-1133">Transmembrane helix</keyword>
<keyword id="KW-0813">Transport</keyword>
<comment type="subcellular location">
    <subcellularLocation>
        <location evidence="1">Membrane</location>
        <topology evidence="1">Multi-pass membrane protein</topology>
    </subcellularLocation>
</comment>
<comment type="alternative products">
    <event type="alternative splicing"/>
    <isoform>
        <id>Q93YS4-1</id>
        <name>1</name>
        <sequence type="displayed"/>
    </isoform>
    <isoform>
        <id>Q93YS4-2</id>
        <name>2</name>
        <sequence type="described" ref="VSP_020233 VSP_020234"/>
    </isoform>
</comment>
<comment type="miscellaneous">
    <molecule>Isoform 2</molecule>
    <text evidence="5">May be due to an intron retention.</text>
</comment>
<comment type="similarity">
    <text evidence="5">Belongs to the ABC transporter superfamily. ABCG family. Eye pigment precursor importer (TC 3.A.1.204) subfamily.</text>
</comment>
<comment type="sequence caution" evidence="5">
    <conflict type="frameshift">
        <sequence resource="EMBL-CDS" id="AAK63861"/>
    </conflict>
</comment>
<comment type="sequence caution" evidence="5">
    <conflict type="frameshift">
        <sequence resource="EMBL-CDS" id="AAN72282"/>
    </conflict>
</comment>
<comment type="sequence caution" evidence="5">
    <conflict type="erroneous gene model prediction">
        <sequence resource="EMBL-CDS" id="BAB11402"/>
    </conflict>
</comment>
<dbReference type="EMBL" id="AP002543">
    <property type="protein sequence ID" value="BAB11402.1"/>
    <property type="status" value="ALT_SEQ"/>
    <property type="molecule type" value="Genomic_DNA"/>
</dbReference>
<dbReference type="EMBL" id="CP002688">
    <property type="protein sequence ID" value="AED91029.1"/>
    <property type="molecule type" value="Genomic_DNA"/>
</dbReference>
<dbReference type="EMBL" id="CP002688">
    <property type="protein sequence ID" value="AED91030.1"/>
    <property type="molecule type" value="Genomic_DNA"/>
</dbReference>
<dbReference type="EMBL" id="CP002688">
    <property type="protein sequence ID" value="AED91031.1"/>
    <property type="molecule type" value="Genomic_DNA"/>
</dbReference>
<dbReference type="EMBL" id="AF389289">
    <property type="protein sequence ID" value="AAK63861.1"/>
    <property type="status" value="ALT_FRAME"/>
    <property type="molecule type" value="mRNA"/>
</dbReference>
<dbReference type="EMBL" id="AY059787">
    <property type="protein sequence ID" value="AAL24135.1"/>
    <property type="molecule type" value="mRNA"/>
</dbReference>
<dbReference type="EMBL" id="AY114068">
    <property type="protein sequence ID" value="AAM45116.1"/>
    <property type="molecule type" value="mRNA"/>
</dbReference>
<dbReference type="EMBL" id="BT002271">
    <property type="protein sequence ID" value="AAN72282.1"/>
    <property type="status" value="ALT_FRAME"/>
    <property type="molecule type" value="mRNA"/>
</dbReference>
<dbReference type="RefSeq" id="NP_001031843.1">
    <molecule id="Q93YS4-2"/>
    <property type="nucleotide sequence ID" value="NM_001036766.2"/>
</dbReference>
<dbReference type="RefSeq" id="NP_568169.1">
    <molecule id="Q93YS4-1"/>
    <property type="nucleotide sequence ID" value="NM_120736.3"/>
</dbReference>
<dbReference type="RefSeq" id="NP_850781.2">
    <molecule id="Q93YS4-1"/>
    <property type="nucleotide sequence ID" value="NM_180450.2"/>
</dbReference>
<dbReference type="SMR" id="Q93YS4"/>
<dbReference type="BioGRID" id="15820">
    <property type="interactions" value="13"/>
</dbReference>
<dbReference type="FunCoup" id="Q93YS4">
    <property type="interactions" value="262"/>
</dbReference>
<dbReference type="IntAct" id="Q93YS4">
    <property type="interactions" value="13"/>
</dbReference>
<dbReference type="STRING" id="3702.Q93YS4"/>
<dbReference type="iPTMnet" id="Q93YS4"/>
<dbReference type="PaxDb" id="3702-AT5G06530.2"/>
<dbReference type="ProteomicsDB" id="244370">
    <molecule id="Q93YS4-1"/>
</dbReference>
<dbReference type="EnsemblPlants" id="AT5G06530.1">
    <molecule id="Q93YS4-1"/>
    <property type="protein sequence ID" value="AT5G06530.1"/>
    <property type="gene ID" value="AT5G06530"/>
</dbReference>
<dbReference type="EnsemblPlants" id="AT5G06530.2">
    <molecule id="Q93YS4-1"/>
    <property type="protein sequence ID" value="AT5G06530.2"/>
    <property type="gene ID" value="AT5G06530"/>
</dbReference>
<dbReference type="EnsemblPlants" id="AT5G06530.3">
    <molecule id="Q93YS4-2"/>
    <property type="protein sequence ID" value="AT5G06530.3"/>
    <property type="gene ID" value="AT5G06530"/>
</dbReference>
<dbReference type="GeneID" id="830541"/>
<dbReference type="Gramene" id="AT5G06530.1">
    <molecule id="Q93YS4-1"/>
    <property type="protein sequence ID" value="AT5G06530.1"/>
    <property type="gene ID" value="AT5G06530"/>
</dbReference>
<dbReference type="Gramene" id="AT5G06530.2">
    <molecule id="Q93YS4-1"/>
    <property type="protein sequence ID" value="AT5G06530.2"/>
    <property type="gene ID" value="AT5G06530"/>
</dbReference>
<dbReference type="Gramene" id="AT5G06530.3">
    <molecule id="Q93YS4-2"/>
    <property type="protein sequence ID" value="AT5G06530.3"/>
    <property type="gene ID" value="AT5G06530"/>
</dbReference>
<dbReference type="KEGG" id="ath:AT5G06530"/>
<dbReference type="Araport" id="AT5G06530"/>
<dbReference type="TAIR" id="AT5G06530">
    <property type="gene designation" value="ABCG22"/>
</dbReference>
<dbReference type="eggNOG" id="KOG0061">
    <property type="taxonomic scope" value="Eukaryota"/>
</dbReference>
<dbReference type="InParanoid" id="Q93YS4"/>
<dbReference type="OMA" id="WLAWEDY"/>
<dbReference type="OrthoDB" id="66620at2759"/>
<dbReference type="PhylomeDB" id="Q93YS4"/>
<dbReference type="PRO" id="PR:Q93YS4"/>
<dbReference type="Proteomes" id="UP000006548">
    <property type="component" value="Chromosome 5"/>
</dbReference>
<dbReference type="ExpressionAtlas" id="Q93YS4">
    <property type="expression patterns" value="baseline and differential"/>
</dbReference>
<dbReference type="GO" id="GO:0016020">
    <property type="term" value="C:membrane"/>
    <property type="evidence" value="ECO:0007669"/>
    <property type="project" value="UniProtKB-SubCell"/>
</dbReference>
<dbReference type="GO" id="GO:0140359">
    <property type="term" value="F:ABC-type transporter activity"/>
    <property type="evidence" value="ECO:0007669"/>
    <property type="project" value="InterPro"/>
</dbReference>
<dbReference type="GO" id="GO:0005524">
    <property type="term" value="F:ATP binding"/>
    <property type="evidence" value="ECO:0007669"/>
    <property type="project" value="UniProtKB-KW"/>
</dbReference>
<dbReference type="GO" id="GO:0016887">
    <property type="term" value="F:ATP hydrolysis activity"/>
    <property type="evidence" value="ECO:0007669"/>
    <property type="project" value="InterPro"/>
</dbReference>
<dbReference type="GO" id="GO:0009414">
    <property type="term" value="P:response to water deprivation"/>
    <property type="evidence" value="ECO:0000315"/>
    <property type="project" value="TAIR"/>
</dbReference>
<dbReference type="GO" id="GO:0010148">
    <property type="term" value="P:transpiration"/>
    <property type="evidence" value="ECO:0000315"/>
    <property type="project" value="TAIR"/>
</dbReference>
<dbReference type="FunFam" id="3.40.50.300:FF:000337">
    <property type="entry name" value="ABC transporter G family member 22"/>
    <property type="match status" value="1"/>
</dbReference>
<dbReference type="Gene3D" id="3.40.50.300">
    <property type="entry name" value="P-loop containing nucleotide triphosphate hydrolases"/>
    <property type="match status" value="1"/>
</dbReference>
<dbReference type="InterPro" id="IPR003593">
    <property type="entry name" value="AAA+_ATPase"/>
</dbReference>
<dbReference type="InterPro" id="IPR013525">
    <property type="entry name" value="ABC2_TM"/>
</dbReference>
<dbReference type="InterPro" id="IPR003439">
    <property type="entry name" value="ABC_transporter-like_ATP-bd"/>
</dbReference>
<dbReference type="InterPro" id="IPR017871">
    <property type="entry name" value="ABC_transporter-like_CS"/>
</dbReference>
<dbReference type="InterPro" id="IPR043926">
    <property type="entry name" value="ABCG_dom"/>
</dbReference>
<dbReference type="InterPro" id="IPR050352">
    <property type="entry name" value="ABCG_transporters"/>
</dbReference>
<dbReference type="InterPro" id="IPR027417">
    <property type="entry name" value="P-loop_NTPase"/>
</dbReference>
<dbReference type="PANTHER" id="PTHR48041:SF94">
    <property type="entry name" value="ABC TRANSPORTER G FAMILY MEMBER 22"/>
    <property type="match status" value="1"/>
</dbReference>
<dbReference type="PANTHER" id="PTHR48041">
    <property type="entry name" value="ABC TRANSPORTER G FAMILY MEMBER 28"/>
    <property type="match status" value="1"/>
</dbReference>
<dbReference type="Pfam" id="PF01061">
    <property type="entry name" value="ABC2_membrane"/>
    <property type="match status" value="1"/>
</dbReference>
<dbReference type="Pfam" id="PF19055">
    <property type="entry name" value="ABC2_membrane_7"/>
    <property type="match status" value="1"/>
</dbReference>
<dbReference type="Pfam" id="PF00005">
    <property type="entry name" value="ABC_tran"/>
    <property type="match status" value="1"/>
</dbReference>
<dbReference type="SMART" id="SM00382">
    <property type="entry name" value="AAA"/>
    <property type="match status" value="1"/>
</dbReference>
<dbReference type="SUPFAM" id="SSF52540">
    <property type="entry name" value="P-loop containing nucleoside triphosphate hydrolases"/>
    <property type="match status" value="1"/>
</dbReference>
<dbReference type="PROSITE" id="PS00211">
    <property type="entry name" value="ABC_TRANSPORTER_1"/>
    <property type="match status" value="1"/>
</dbReference>
<dbReference type="PROSITE" id="PS50893">
    <property type="entry name" value="ABC_TRANSPORTER_2"/>
    <property type="match status" value="1"/>
</dbReference>
<protein>
    <recommendedName>
        <fullName>ABC transporter G family member 22</fullName>
        <shortName>ABC transporter ABCG.22</shortName>
        <shortName>AtABCG22</shortName>
    </recommendedName>
    <alternativeName>
        <fullName>White-brown complex homolog protein 23</fullName>
        <shortName>AtWBC23</shortName>
    </alternativeName>
</protein>
<organism>
    <name type="scientific">Arabidopsis thaliana</name>
    <name type="common">Mouse-ear cress</name>
    <dbReference type="NCBI Taxonomy" id="3702"/>
    <lineage>
        <taxon>Eukaryota</taxon>
        <taxon>Viridiplantae</taxon>
        <taxon>Streptophyta</taxon>
        <taxon>Embryophyta</taxon>
        <taxon>Tracheophyta</taxon>
        <taxon>Spermatophyta</taxon>
        <taxon>Magnoliopsida</taxon>
        <taxon>eudicotyledons</taxon>
        <taxon>Gunneridae</taxon>
        <taxon>Pentapetalae</taxon>
        <taxon>rosids</taxon>
        <taxon>malvids</taxon>
        <taxon>Brassicales</taxon>
        <taxon>Brassicaceae</taxon>
        <taxon>Camelineae</taxon>
        <taxon>Arabidopsis</taxon>
    </lineage>
</organism>
<accession>Q93YS4</accession>
<accession>Q94EX0</accession>
<accession>Q9FG17</accession>
<gene>
    <name type="primary">ABCG22</name>
    <name type="synonym">WBC23</name>
    <name type="ordered locus">At5g06530</name>
    <name type="ORF">F15M7.6</name>
</gene>
<reference key="1">
    <citation type="submission" date="2000-06" db="EMBL/GenBank/DDBJ databases">
        <title>Structural analysis of Arabidopsis thaliana chromosome 5. XI.</title>
        <authorList>
            <person name="Kaneko T."/>
            <person name="Katoh T."/>
            <person name="Asamizu E."/>
            <person name="Sato S."/>
            <person name="Nakamura Y."/>
            <person name="Kotani H."/>
            <person name="Tabata S."/>
        </authorList>
    </citation>
    <scope>NUCLEOTIDE SEQUENCE [LARGE SCALE GENOMIC DNA]</scope>
    <source>
        <strain>cv. Columbia</strain>
    </source>
</reference>
<reference key="2">
    <citation type="journal article" date="2017" name="Plant J.">
        <title>Araport11: a complete reannotation of the Arabidopsis thaliana reference genome.</title>
        <authorList>
            <person name="Cheng C.Y."/>
            <person name="Krishnakumar V."/>
            <person name="Chan A.P."/>
            <person name="Thibaud-Nissen F."/>
            <person name="Schobel S."/>
            <person name="Town C.D."/>
        </authorList>
    </citation>
    <scope>GENOME REANNOTATION</scope>
    <source>
        <strain>cv. Columbia</strain>
    </source>
</reference>
<reference key="3">
    <citation type="journal article" date="2003" name="Science">
        <title>Empirical analysis of transcriptional activity in the Arabidopsis genome.</title>
        <authorList>
            <person name="Yamada K."/>
            <person name="Lim J."/>
            <person name="Dale J.M."/>
            <person name="Chen H."/>
            <person name="Shinn P."/>
            <person name="Palm C.J."/>
            <person name="Southwick A.M."/>
            <person name="Wu H.C."/>
            <person name="Kim C.J."/>
            <person name="Nguyen M."/>
            <person name="Pham P.K."/>
            <person name="Cheuk R.F."/>
            <person name="Karlin-Newmann G."/>
            <person name="Liu S.X."/>
            <person name="Lam B."/>
            <person name="Sakano H."/>
            <person name="Wu T."/>
            <person name="Yu G."/>
            <person name="Miranda M."/>
            <person name="Quach H.L."/>
            <person name="Tripp M."/>
            <person name="Chang C.H."/>
            <person name="Lee J.M."/>
            <person name="Toriumi M.J."/>
            <person name="Chan M.M."/>
            <person name="Tang C.C."/>
            <person name="Onodera C.S."/>
            <person name="Deng J.M."/>
            <person name="Akiyama K."/>
            <person name="Ansari Y."/>
            <person name="Arakawa T."/>
            <person name="Banh J."/>
            <person name="Banno F."/>
            <person name="Bowser L."/>
            <person name="Brooks S.Y."/>
            <person name="Carninci P."/>
            <person name="Chao Q."/>
            <person name="Choy N."/>
            <person name="Enju A."/>
            <person name="Goldsmith A.D."/>
            <person name="Gurjal M."/>
            <person name="Hansen N.F."/>
            <person name="Hayashizaki Y."/>
            <person name="Johnson-Hopson C."/>
            <person name="Hsuan V.W."/>
            <person name="Iida K."/>
            <person name="Karnes M."/>
            <person name="Khan S."/>
            <person name="Koesema E."/>
            <person name="Ishida J."/>
            <person name="Jiang P.X."/>
            <person name="Jones T."/>
            <person name="Kawai J."/>
            <person name="Kamiya A."/>
            <person name="Meyers C."/>
            <person name="Nakajima M."/>
            <person name="Narusaka M."/>
            <person name="Seki M."/>
            <person name="Sakurai T."/>
            <person name="Satou M."/>
            <person name="Tamse R."/>
            <person name="Vaysberg M."/>
            <person name="Wallender E.K."/>
            <person name="Wong C."/>
            <person name="Yamamura Y."/>
            <person name="Yuan S."/>
            <person name="Shinozaki K."/>
            <person name="Davis R.W."/>
            <person name="Theologis A."/>
            <person name="Ecker J.R."/>
        </authorList>
    </citation>
    <scope>NUCLEOTIDE SEQUENCE [LARGE SCALE MRNA] (ISOFORM 1)</scope>
    <source>
        <strain>cv. Columbia</strain>
    </source>
</reference>
<reference key="4">
    <citation type="journal article" date="2001" name="J. Biol. Chem.">
        <title>The Arabidopsis thaliana ABC protein superfamily, a complete inventory.</title>
        <authorList>
            <person name="Sanchez-Fernandez R."/>
            <person name="Davies T.G."/>
            <person name="Coleman J.O."/>
            <person name="Rea P.A."/>
        </authorList>
    </citation>
    <scope>GENE FAMILY</scope>
    <scope>NOMENCLATURE</scope>
</reference>
<reference key="5">
    <citation type="journal article" date="2008" name="Trends Plant Sci.">
        <title>Plant ABC proteins - a unified nomenclature and updated inventory.</title>
        <authorList>
            <person name="Verrier P.J."/>
            <person name="Bird D."/>
            <person name="Burla B."/>
            <person name="Dassa E."/>
            <person name="Forestier C."/>
            <person name="Geisler M."/>
            <person name="Klein M."/>
            <person name="Kolukisaoglu H.U."/>
            <person name="Lee Y."/>
            <person name="Martinoia E."/>
            <person name="Murphy A."/>
            <person name="Rea P.A."/>
            <person name="Samuels L."/>
            <person name="Schulz B."/>
            <person name="Spalding E.J."/>
            <person name="Yazaki K."/>
            <person name="Theodoulou F.L."/>
        </authorList>
    </citation>
    <scope>GENE FAMILY</scope>
    <scope>NOMENCLATURE</scope>
</reference>
<reference key="6">
    <citation type="journal article" date="2009" name="Plant Physiol.">
        <title>Large-scale Arabidopsis phosphoproteome profiling reveals novel chloroplast kinase substrates and phosphorylation networks.</title>
        <authorList>
            <person name="Reiland S."/>
            <person name="Messerli G."/>
            <person name="Baerenfaller K."/>
            <person name="Gerrits B."/>
            <person name="Endler A."/>
            <person name="Grossmann J."/>
            <person name="Gruissem W."/>
            <person name="Baginsky S."/>
        </authorList>
    </citation>
    <scope>IDENTIFICATION BY MASS SPECTROMETRY [LARGE SCALE ANALYSIS]</scope>
</reference>
<evidence type="ECO:0000250" key="1"/>
<evidence type="ECO:0000255" key="2"/>
<evidence type="ECO:0000255" key="3">
    <source>
        <dbReference type="PROSITE-ProRule" id="PRU00434"/>
    </source>
</evidence>
<evidence type="ECO:0000256" key="4">
    <source>
        <dbReference type="SAM" id="MobiDB-lite"/>
    </source>
</evidence>
<evidence type="ECO:0000305" key="5"/>
<proteinExistence type="evidence at protein level"/>
<feature type="chain" id="PRO_0000240694" description="ABC transporter G family member 22">
    <location>
        <begin position="1"/>
        <end position="751"/>
    </location>
</feature>
<feature type="transmembrane region" description="Helical" evidence="2">
    <location>
        <begin position="516"/>
        <end position="536"/>
    </location>
</feature>
<feature type="transmembrane region" description="Helical" evidence="2">
    <location>
        <begin position="552"/>
        <end position="572"/>
    </location>
</feature>
<feature type="transmembrane region" description="Helical" evidence="2">
    <location>
        <begin position="602"/>
        <end position="622"/>
    </location>
</feature>
<feature type="transmembrane region" description="Helical" evidence="2">
    <location>
        <begin position="634"/>
        <end position="654"/>
    </location>
</feature>
<feature type="transmembrane region" description="Helical" evidence="2">
    <location>
        <begin position="666"/>
        <end position="686"/>
    </location>
</feature>
<feature type="transmembrane region" description="Helical" evidence="2">
    <location>
        <begin position="722"/>
        <end position="742"/>
    </location>
</feature>
<feature type="domain" description="ABC transporter" evidence="3">
    <location>
        <begin position="157"/>
        <end position="403"/>
    </location>
</feature>
<feature type="domain" description="ABC transmembrane type-2">
    <location>
        <begin position="498"/>
        <end position="707"/>
    </location>
</feature>
<feature type="region of interest" description="Disordered" evidence="4">
    <location>
        <begin position="26"/>
        <end position="81"/>
    </location>
</feature>
<feature type="binding site" evidence="3">
    <location>
        <begin position="197"/>
        <end position="204"/>
    </location>
    <ligand>
        <name>ATP</name>
        <dbReference type="ChEBI" id="CHEBI:30616"/>
    </ligand>
</feature>
<feature type="splice variant" id="VSP_020233" description="In isoform 2." evidence="5">
    <original>KVPVFISWIRY</original>
    <variation>ASPLFLDFLCF</variation>
    <location>
        <begin position="681"/>
        <end position="691"/>
    </location>
</feature>
<feature type="splice variant" id="VSP_020234" description="In isoform 2." evidence="5">
    <location>
        <begin position="692"/>
        <end position="751"/>
    </location>
</feature>
<feature type="sequence conflict" description="In Ref. 3; AAK63861/AAN72282." evidence="5" ref="3">
    <original>D</original>
    <variation>G</variation>
    <location>
        <position position="131"/>
    </location>
</feature>
<feature type="sequence conflict" description="In Ref. 3; AAK63861/AAN72282." evidence="5" ref="3">
    <original>W</original>
    <variation>R</variation>
    <location>
        <position position="536"/>
    </location>
</feature>